<sequence>MSITAKSVYRDAGNFFRNQFITILLVSLLCAFITVVLGHAFSPSDAQIAQLSEGEHLAGSAGLFELVQNMTPEQQQILLRASAASTFSGLIGNAILAGGIILMIQLVSAGHRVSALRAIGASAPALPKLFILIFLTTLLVQIGIMLIVVPGIIMAIVLALAPVMLVEEKMGVFAAMRSSMRLAWANMRLVAPAVIGWLLAKTLLLLFAPSFAVLTPNVGAVLANTLSNLISAVLLIYLFRLYMLIRQ</sequence>
<proteinExistence type="inferred from homology"/>
<protein>
    <recommendedName>
        <fullName evidence="1">UPF0259 membrane protein YciC</fullName>
    </recommendedName>
</protein>
<feature type="chain" id="PRO_1000136592" description="UPF0259 membrane protein YciC">
    <location>
        <begin position="1"/>
        <end position="247"/>
    </location>
</feature>
<feature type="transmembrane region" description="Helical" evidence="1">
    <location>
        <begin position="20"/>
        <end position="40"/>
    </location>
</feature>
<feature type="transmembrane region" description="Helical" evidence="1">
    <location>
        <begin position="87"/>
        <end position="107"/>
    </location>
</feature>
<feature type="transmembrane region" description="Helical" evidence="1">
    <location>
        <begin position="118"/>
        <end position="140"/>
    </location>
</feature>
<feature type="transmembrane region" description="Helical" evidence="1">
    <location>
        <begin position="152"/>
        <end position="172"/>
    </location>
</feature>
<feature type="transmembrane region" description="Helical" evidence="1">
    <location>
        <begin position="194"/>
        <end position="214"/>
    </location>
</feature>
<feature type="transmembrane region" description="Helical" evidence="1">
    <location>
        <begin position="219"/>
        <end position="239"/>
    </location>
</feature>
<organism>
    <name type="scientific">Salmonella heidelberg (strain SL476)</name>
    <dbReference type="NCBI Taxonomy" id="454169"/>
    <lineage>
        <taxon>Bacteria</taxon>
        <taxon>Pseudomonadati</taxon>
        <taxon>Pseudomonadota</taxon>
        <taxon>Gammaproteobacteria</taxon>
        <taxon>Enterobacterales</taxon>
        <taxon>Enterobacteriaceae</taxon>
        <taxon>Salmonella</taxon>
    </lineage>
</organism>
<reference key="1">
    <citation type="journal article" date="2011" name="J. Bacteriol.">
        <title>Comparative genomics of 28 Salmonella enterica isolates: evidence for CRISPR-mediated adaptive sublineage evolution.</title>
        <authorList>
            <person name="Fricke W.F."/>
            <person name="Mammel M.K."/>
            <person name="McDermott P.F."/>
            <person name="Tartera C."/>
            <person name="White D.G."/>
            <person name="Leclerc J.E."/>
            <person name="Ravel J."/>
            <person name="Cebula T.A."/>
        </authorList>
    </citation>
    <scope>NUCLEOTIDE SEQUENCE [LARGE SCALE GENOMIC DNA]</scope>
    <source>
        <strain>SL476</strain>
    </source>
</reference>
<name>YCIC_SALHS</name>
<gene>
    <name evidence="1" type="primary">yciC</name>
    <name type="ordered locus">SeHA_C1924</name>
</gene>
<accession>B4TJL6</accession>
<keyword id="KW-0997">Cell inner membrane</keyword>
<keyword id="KW-1003">Cell membrane</keyword>
<keyword id="KW-0472">Membrane</keyword>
<keyword id="KW-0812">Transmembrane</keyword>
<keyword id="KW-1133">Transmembrane helix</keyword>
<dbReference type="EMBL" id="CP001120">
    <property type="protein sequence ID" value="ACF66846.1"/>
    <property type="molecule type" value="Genomic_DNA"/>
</dbReference>
<dbReference type="RefSeq" id="WP_000028507.1">
    <property type="nucleotide sequence ID" value="NC_011083.1"/>
</dbReference>
<dbReference type="KEGG" id="seh:SeHA_C1924"/>
<dbReference type="HOGENOM" id="CLU_073287_0_0_6"/>
<dbReference type="Proteomes" id="UP000001866">
    <property type="component" value="Chromosome"/>
</dbReference>
<dbReference type="GO" id="GO:0005886">
    <property type="term" value="C:plasma membrane"/>
    <property type="evidence" value="ECO:0007669"/>
    <property type="project" value="UniProtKB-SubCell"/>
</dbReference>
<dbReference type="HAMAP" id="MF_01067">
    <property type="entry name" value="UPF0259"/>
    <property type="match status" value="1"/>
</dbReference>
<dbReference type="InterPro" id="IPR009627">
    <property type="entry name" value="UPF0259"/>
</dbReference>
<dbReference type="NCBIfam" id="NF002774">
    <property type="entry name" value="PRK02868.1"/>
    <property type="match status" value="1"/>
</dbReference>
<dbReference type="Pfam" id="PF06790">
    <property type="entry name" value="UPF0259"/>
    <property type="match status" value="1"/>
</dbReference>
<comment type="subcellular location">
    <subcellularLocation>
        <location evidence="1">Cell inner membrane</location>
        <topology evidence="1">Multi-pass membrane protein</topology>
    </subcellularLocation>
</comment>
<comment type="similarity">
    <text evidence="1">Belongs to the UPF0259 family.</text>
</comment>
<evidence type="ECO:0000255" key="1">
    <source>
        <dbReference type="HAMAP-Rule" id="MF_01067"/>
    </source>
</evidence>